<feature type="chain" id="PRO_0000379391" description="ATP-dependent helicase/deoxyribonuclease subunit B">
    <location>
        <begin position="1"/>
        <end position="1073"/>
    </location>
</feature>
<keyword id="KW-0067">ATP-binding</keyword>
<keyword id="KW-0227">DNA damage</keyword>
<keyword id="KW-0234">DNA repair</keyword>
<keyword id="KW-0238">DNA-binding</keyword>
<keyword id="KW-0269">Exonuclease</keyword>
<keyword id="KW-0347">Helicase</keyword>
<keyword id="KW-0378">Hydrolase</keyword>
<keyword id="KW-0540">Nuclease</keyword>
<keyword id="KW-0547">Nucleotide-binding</keyword>
<sequence>MKLLYTEISYSMTEILVKEARAYADKGYRVFYIAPNSLSFEKERSVLALLPEQGSFAITVTRFEQMARYFTLAKAANRQALDDNGLAMIFYRVLMQLQEDELKVFHRLRTDQAFIAQLVELYKELQAANLTAFDLTTLDRPEKQEDLITIMTKAEQLIAQGDYDQSSRLAQLAEAIKSKSLDDELRQTVLVIDGFTRFSAEEEQLLALLNEACEEIVIGAYISQKAYRLAFTKGNLYEASLAFIQQLAQQFQTKPIYTTSEKVFDVSFSRLTQLLEANHDYSQLDWQLSAKDKSKVVIWQALNQKEELEHVTKAIREKLYQGYRYKDMLVLLGDVASYQLQIGPIFEKFEIPYYIGKQEPMSAHPLVQFVESLERGRRYNWRREDIVNLLKSGLFGRFQEGELDQLEQYLVFADIQGFTKFSRPFTLNSSRQYPLPLLNQLRLAVVTPLQQLFKSQKQLGASLLDKLMTFFKTIQLADNFEALAGSRREADREKDEEVWKTFTGILETFYQVFGQEKMTLADCLALIKMGMQTAHYRTVPATLDVVSIKSYDLVEPHSKPFVFAIGLSRSHFPKQTKNTSLISDQERASINEQTASYQRLDVPSFENIKKNHQTALSLFNAATQELVLSLPTSLTNSSDDVSPYLKELIALGVPVIEKGKNRLSHSAADIGNYKALLSRLVAINRQGIADDMTSEDRNFWTVALRYLKRRLADEQLSLPAFEHHLTTKPVAPEVIETRFPSQQPLSLSSSALTVFYNNQYKYFLKYVLGLQEPESIHPDARIHGQYLHRIFELVTKDRSNAAFDQKLGAAIAAVNQQSAFQQVYQADAEGRYSLEVLKGIAYSTAPVLNLNQGMQVAKQEEAFELALGHQALIRGVIDRIDQLADGRLGIVDYKSSARVFDIGAFYNGLSPQLVTYLAALKNKGQGLFGAMYLHMQEPRLSLSDFKVLDDQLVAAAYKELTYKGIFLAQAKEYLANGSYHLNNTLYETDELETLLAYNEQLYLSAVKQIKTGHFLINPYTADGKSVQGDQLKAITRFEADLDLGYARRLVVLPAKERRQAFLTRMNEEIKHED</sequence>
<gene>
    <name evidence="1" type="primary">rexB</name>
    <name type="ordered locus">Sez_0828</name>
</gene>
<evidence type="ECO:0000255" key="1">
    <source>
        <dbReference type="HAMAP-Rule" id="MF_01453"/>
    </source>
</evidence>
<evidence type="ECO:0000305" key="2"/>
<dbReference type="EC" id="3.1.-.-" evidence="1"/>
<dbReference type="EMBL" id="CP001129">
    <property type="protein sequence ID" value="ACG62187.1"/>
    <property type="status" value="ALT_INIT"/>
    <property type="molecule type" value="Genomic_DNA"/>
</dbReference>
<dbReference type="RefSeq" id="WP_041785439.1">
    <property type="nucleotide sequence ID" value="NC_011134.1"/>
</dbReference>
<dbReference type="SMR" id="B4U2H0"/>
<dbReference type="KEGG" id="sez:Sez_0828"/>
<dbReference type="HOGENOM" id="CLU_007838_0_0_9"/>
<dbReference type="Proteomes" id="UP000001873">
    <property type="component" value="Chromosome"/>
</dbReference>
<dbReference type="GO" id="GO:0008409">
    <property type="term" value="F:5'-3' exonuclease activity"/>
    <property type="evidence" value="ECO:0007669"/>
    <property type="project" value="UniProtKB-UniRule"/>
</dbReference>
<dbReference type="GO" id="GO:0005524">
    <property type="term" value="F:ATP binding"/>
    <property type="evidence" value="ECO:0007669"/>
    <property type="project" value="UniProtKB-UniRule"/>
</dbReference>
<dbReference type="GO" id="GO:0003690">
    <property type="term" value="F:double-stranded DNA binding"/>
    <property type="evidence" value="ECO:0007669"/>
    <property type="project" value="UniProtKB-UniRule"/>
</dbReference>
<dbReference type="GO" id="GO:0004386">
    <property type="term" value="F:helicase activity"/>
    <property type="evidence" value="ECO:0007669"/>
    <property type="project" value="UniProtKB-KW"/>
</dbReference>
<dbReference type="GO" id="GO:0016817">
    <property type="term" value="F:hydrolase activity, acting on acid anhydrides"/>
    <property type="evidence" value="ECO:0007669"/>
    <property type="project" value="InterPro"/>
</dbReference>
<dbReference type="GO" id="GO:0000724">
    <property type="term" value="P:double-strand break repair via homologous recombination"/>
    <property type="evidence" value="ECO:0007669"/>
    <property type="project" value="UniProtKB-UniRule"/>
</dbReference>
<dbReference type="Gene3D" id="3.90.320.10">
    <property type="match status" value="1"/>
</dbReference>
<dbReference type="Gene3D" id="3.40.50.300">
    <property type="entry name" value="P-loop containing nucleotide triphosphate hydrolases"/>
    <property type="match status" value="4"/>
</dbReference>
<dbReference type="HAMAP" id="MF_01453">
    <property type="entry name" value="AddB_type2"/>
    <property type="match status" value="1"/>
</dbReference>
<dbReference type="InterPro" id="IPR049035">
    <property type="entry name" value="ADDB_N"/>
</dbReference>
<dbReference type="InterPro" id="IPR014141">
    <property type="entry name" value="DNA_helicase_suRexB"/>
</dbReference>
<dbReference type="InterPro" id="IPR027417">
    <property type="entry name" value="P-loop_NTPase"/>
</dbReference>
<dbReference type="InterPro" id="IPR011604">
    <property type="entry name" value="PDDEXK-like_dom_sf"/>
</dbReference>
<dbReference type="InterPro" id="IPR038726">
    <property type="entry name" value="PDDEXK_AddAB-type"/>
</dbReference>
<dbReference type="InterPro" id="IPR011335">
    <property type="entry name" value="Restrct_endonuc-II-like"/>
</dbReference>
<dbReference type="NCBIfam" id="TIGR02774">
    <property type="entry name" value="rexB_recomb"/>
    <property type="match status" value="1"/>
</dbReference>
<dbReference type="PANTHER" id="PTHR30591">
    <property type="entry name" value="RECBCD ENZYME SUBUNIT RECC"/>
    <property type="match status" value="1"/>
</dbReference>
<dbReference type="PANTHER" id="PTHR30591:SF1">
    <property type="entry name" value="RECBCD ENZYME SUBUNIT RECC"/>
    <property type="match status" value="1"/>
</dbReference>
<dbReference type="Pfam" id="PF21445">
    <property type="entry name" value="ADDB_N"/>
    <property type="match status" value="1"/>
</dbReference>
<dbReference type="Pfam" id="PF12705">
    <property type="entry name" value="PDDEXK_1"/>
    <property type="match status" value="1"/>
</dbReference>
<dbReference type="SUPFAM" id="SSF52540">
    <property type="entry name" value="P-loop containing nucleoside triphosphate hydrolases"/>
    <property type="match status" value="1"/>
</dbReference>
<dbReference type="SUPFAM" id="SSF52980">
    <property type="entry name" value="Restriction endonuclease-like"/>
    <property type="match status" value="1"/>
</dbReference>
<name>ADDB_STREM</name>
<comment type="function">
    <text evidence="1">The heterodimer acts as both an ATP-dependent DNA helicase and an ATP-dependent, dual-direction single-stranded exonuclease. Recognizes the chi site generating a DNA molecule suitable for the initiation of homologous recombination. This subunit has 5' -&gt; 3' nuclease activity but not helicase activity.</text>
</comment>
<comment type="cofactor">
    <cofactor evidence="1">
        <name>Mg(2+)</name>
        <dbReference type="ChEBI" id="CHEBI:18420"/>
    </cofactor>
</comment>
<comment type="subunit">
    <text evidence="1">Heterodimer of AddA and RexB.</text>
</comment>
<comment type="miscellaneous">
    <text evidence="1">Despite having helicase-like domains, this subunit does not have helicase activity.</text>
</comment>
<comment type="similarity">
    <text evidence="1">Belongs to the helicase family. AddB/RexB type 2 subfamily.</text>
</comment>
<comment type="sequence caution" evidence="2">
    <conflict type="erroneous initiation">
        <sequence resource="EMBL-CDS" id="ACG62187"/>
    </conflict>
    <text>Extended N-terminus.</text>
</comment>
<organism>
    <name type="scientific">Streptococcus equi subsp. zooepidemicus (strain MGCS10565)</name>
    <dbReference type="NCBI Taxonomy" id="552526"/>
    <lineage>
        <taxon>Bacteria</taxon>
        <taxon>Bacillati</taxon>
        <taxon>Bacillota</taxon>
        <taxon>Bacilli</taxon>
        <taxon>Lactobacillales</taxon>
        <taxon>Streptococcaceae</taxon>
        <taxon>Streptococcus</taxon>
    </lineage>
</organism>
<protein>
    <recommendedName>
        <fullName evidence="1">ATP-dependent helicase/deoxyribonuclease subunit B</fullName>
        <ecNumber evidence="1">3.1.-.-</ecNumber>
    </recommendedName>
    <alternativeName>
        <fullName evidence="1">ATP-dependent helicase/nuclease subunit RexB</fullName>
    </alternativeName>
</protein>
<reference key="1">
    <citation type="journal article" date="2008" name="PLoS ONE">
        <title>Genome sequence of a lancefield group C Streptococcus zooepidemicus strain causing epidemic nephritis: new information about an old disease.</title>
        <authorList>
            <person name="Beres S.B."/>
            <person name="Sesso R."/>
            <person name="Pinto S.W.L."/>
            <person name="Hoe N.P."/>
            <person name="Porcella S.F."/>
            <person name="Deleo F.R."/>
            <person name="Musser J.M."/>
        </authorList>
    </citation>
    <scope>NUCLEOTIDE SEQUENCE [LARGE SCALE GENOMIC DNA]</scope>
    <source>
        <strain>MGCS10565</strain>
    </source>
</reference>
<accession>B4U2H0</accession>
<proteinExistence type="inferred from homology"/>